<dbReference type="EMBL" id="CP000323">
    <property type="protein sequence ID" value="ABE76248.1"/>
    <property type="molecule type" value="Genomic_DNA"/>
</dbReference>
<dbReference type="RefSeq" id="WP_011514769.1">
    <property type="nucleotide sequence ID" value="NC_007969.1"/>
</dbReference>
<dbReference type="SMR" id="Q1Q7V5"/>
<dbReference type="STRING" id="335284.Pcryo_2471"/>
<dbReference type="KEGG" id="pcr:Pcryo_2471"/>
<dbReference type="eggNOG" id="COG1327">
    <property type="taxonomic scope" value="Bacteria"/>
</dbReference>
<dbReference type="HOGENOM" id="CLU_108412_0_0_6"/>
<dbReference type="Proteomes" id="UP000002425">
    <property type="component" value="Chromosome"/>
</dbReference>
<dbReference type="GO" id="GO:0005524">
    <property type="term" value="F:ATP binding"/>
    <property type="evidence" value="ECO:0007669"/>
    <property type="project" value="UniProtKB-KW"/>
</dbReference>
<dbReference type="GO" id="GO:0003677">
    <property type="term" value="F:DNA binding"/>
    <property type="evidence" value="ECO:0007669"/>
    <property type="project" value="UniProtKB-KW"/>
</dbReference>
<dbReference type="GO" id="GO:0008270">
    <property type="term" value="F:zinc ion binding"/>
    <property type="evidence" value="ECO:0007669"/>
    <property type="project" value="UniProtKB-UniRule"/>
</dbReference>
<dbReference type="GO" id="GO:0045892">
    <property type="term" value="P:negative regulation of DNA-templated transcription"/>
    <property type="evidence" value="ECO:0007669"/>
    <property type="project" value="UniProtKB-UniRule"/>
</dbReference>
<dbReference type="HAMAP" id="MF_00440">
    <property type="entry name" value="NrdR"/>
    <property type="match status" value="1"/>
</dbReference>
<dbReference type="InterPro" id="IPR005144">
    <property type="entry name" value="ATP-cone_dom"/>
</dbReference>
<dbReference type="InterPro" id="IPR055173">
    <property type="entry name" value="NrdR-like_N"/>
</dbReference>
<dbReference type="InterPro" id="IPR003796">
    <property type="entry name" value="RNR_NrdR-like"/>
</dbReference>
<dbReference type="NCBIfam" id="TIGR00244">
    <property type="entry name" value="transcriptional regulator NrdR"/>
    <property type="match status" value="1"/>
</dbReference>
<dbReference type="PANTHER" id="PTHR30455">
    <property type="entry name" value="TRANSCRIPTIONAL REPRESSOR NRDR"/>
    <property type="match status" value="1"/>
</dbReference>
<dbReference type="PANTHER" id="PTHR30455:SF2">
    <property type="entry name" value="TRANSCRIPTIONAL REPRESSOR NRDR"/>
    <property type="match status" value="1"/>
</dbReference>
<dbReference type="Pfam" id="PF03477">
    <property type="entry name" value="ATP-cone"/>
    <property type="match status" value="1"/>
</dbReference>
<dbReference type="Pfam" id="PF22811">
    <property type="entry name" value="Zn_ribbon_NrdR"/>
    <property type="match status" value="1"/>
</dbReference>
<dbReference type="PROSITE" id="PS51161">
    <property type="entry name" value="ATP_CONE"/>
    <property type="match status" value="1"/>
</dbReference>
<proteinExistence type="inferred from homology"/>
<protein>
    <recommendedName>
        <fullName evidence="1">Transcriptional repressor NrdR</fullName>
    </recommendedName>
</protein>
<evidence type="ECO:0000255" key="1">
    <source>
        <dbReference type="HAMAP-Rule" id="MF_00440"/>
    </source>
</evidence>
<comment type="function">
    <text evidence="1">Negatively regulates transcription of bacterial ribonucleotide reductase nrd genes and operons by binding to NrdR-boxes.</text>
</comment>
<comment type="cofactor">
    <cofactor evidence="1">
        <name>Zn(2+)</name>
        <dbReference type="ChEBI" id="CHEBI:29105"/>
    </cofactor>
    <text evidence="1">Binds 1 zinc ion.</text>
</comment>
<comment type="similarity">
    <text evidence="1">Belongs to the NrdR family.</text>
</comment>
<organism>
    <name type="scientific">Psychrobacter cryohalolentis (strain ATCC BAA-1226 / DSM 17306 / VKM B-2378 / K5)</name>
    <dbReference type="NCBI Taxonomy" id="335284"/>
    <lineage>
        <taxon>Bacteria</taxon>
        <taxon>Pseudomonadati</taxon>
        <taxon>Pseudomonadota</taxon>
        <taxon>Gammaproteobacteria</taxon>
        <taxon>Moraxellales</taxon>
        <taxon>Moraxellaceae</taxon>
        <taxon>Psychrobacter</taxon>
    </lineage>
</organism>
<name>NRDR_PSYCK</name>
<feature type="chain" id="PRO_0000264197" description="Transcriptional repressor NrdR">
    <location>
        <begin position="1"/>
        <end position="152"/>
    </location>
</feature>
<feature type="domain" description="ATP-cone" evidence="1">
    <location>
        <begin position="49"/>
        <end position="139"/>
    </location>
</feature>
<feature type="zinc finger region" evidence="1">
    <location>
        <begin position="3"/>
        <end position="34"/>
    </location>
</feature>
<reference key="1">
    <citation type="submission" date="2006-03" db="EMBL/GenBank/DDBJ databases">
        <title>Complete sequence of chromosome of Psychrobacter cryohalolentis K5.</title>
        <authorList>
            <consortium name="US DOE Joint Genome Institute"/>
            <person name="Copeland A."/>
            <person name="Lucas S."/>
            <person name="Lapidus A."/>
            <person name="Barry K."/>
            <person name="Detter J.C."/>
            <person name="Glavina T."/>
            <person name="Hammon N."/>
            <person name="Israni S."/>
            <person name="Dalin E."/>
            <person name="Tice H."/>
            <person name="Pitluck S."/>
            <person name="Brettin T."/>
            <person name="Bruce D."/>
            <person name="Han C."/>
            <person name="Tapia R."/>
            <person name="Sims D.R."/>
            <person name="Gilna P."/>
            <person name="Schmutz J."/>
            <person name="Larimer F."/>
            <person name="Land M."/>
            <person name="Hauser L."/>
            <person name="Kyrpides N."/>
            <person name="Kim E."/>
            <person name="Richardson P."/>
        </authorList>
    </citation>
    <scope>NUCLEOTIDE SEQUENCE [LARGE SCALE GENOMIC DNA]</scope>
    <source>
        <strain>ATCC BAA-1226 / DSM 17306 / VKM B-2378 / K5</strain>
    </source>
</reference>
<sequence>MHCPYCNASETKVIDSRLAAEGAQVRRRRSCNSCQERFTTFEVVEVVMPRIIKSSGKIEPYDNDKLRRSILLPLQKRPITIDEQEGMISRIEKRVRQMGEREVSSKVLGEIIMSELKTLDDVAYVRFASVYRDFQDIDAFHQEIANIRPNEK</sequence>
<accession>Q1Q7V5</accession>
<gene>
    <name evidence="1" type="primary">nrdR</name>
    <name type="ordered locus">Pcryo_2471</name>
</gene>
<keyword id="KW-0067">ATP-binding</keyword>
<keyword id="KW-0238">DNA-binding</keyword>
<keyword id="KW-0479">Metal-binding</keyword>
<keyword id="KW-0547">Nucleotide-binding</keyword>
<keyword id="KW-0678">Repressor</keyword>
<keyword id="KW-0804">Transcription</keyword>
<keyword id="KW-0805">Transcription regulation</keyword>
<keyword id="KW-0862">Zinc</keyword>
<keyword id="KW-0863">Zinc-finger</keyword>